<sequence length="546" mass="63187">MTPGEVRRLYFIIRTFLSYGLDELIPKMRITLPLRLWRYSLFWMPNRHKDKPLGERLRLALQELGPVWIKFGQMLSTRRDLFPPHIADQLALLQDKVAPFDGKLAKQQIEAAMGGLPVEAWFDDFEIKPLASASIAQVHTARLKSNGKEVVIKVIRPDILPVIKADLKLIYRLARWVPRLLPDGRRLRPTEVVREYEKTLIDELNLLRESANAIQLRRNFEDSPMLYIPEVYPDYCSEGMMVMERIYGIPVSDVAALEKNGTNMKLLAERGVQVFFTQVFRDSFFHADMHPGNIFVSYEHPENPKYIGIDCGIVGSLNKEDKRYLAENFIAFFNRDYRKVAELHVDSGWVPPDTNVEEFEFAIRTVCEPIFEKPLAEISFGHVLLNLFNTARRFNMEVQPQLVLLQKTLLYVEGVGRQLYPQLDLWKTAKPFLESWIKDQVGIPALVRAFKEKAPFWVEKMPELPELVYDSLRQGKYLQHSVDKIARELQSNHVRQGQSRYFLGIGATLVLSGTFLLVSRPEWGLMPGWLMAGGLIAWFVGWRKTR</sequence>
<feature type="chain" id="PRO_1000123904" description="Probable protein kinase UbiB">
    <location>
        <begin position="1"/>
        <end position="546"/>
    </location>
</feature>
<feature type="transmembrane region" description="Helical" evidence="1">
    <location>
        <begin position="501"/>
        <end position="521"/>
    </location>
</feature>
<feature type="transmembrane region" description="Helical" evidence="1">
    <location>
        <begin position="522"/>
        <end position="542"/>
    </location>
</feature>
<feature type="domain" description="Protein kinase" evidence="1">
    <location>
        <begin position="124"/>
        <end position="502"/>
    </location>
</feature>
<feature type="active site" description="Proton acceptor" evidence="1">
    <location>
        <position position="288"/>
    </location>
</feature>
<feature type="binding site" evidence="1">
    <location>
        <begin position="130"/>
        <end position="138"/>
    </location>
    <ligand>
        <name>ATP</name>
        <dbReference type="ChEBI" id="CHEBI:30616"/>
    </ligand>
</feature>
<feature type="binding site" evidence="1">
    <location>
        <position position="153"/>
    </location>
    <ligand>
        <name>ATP</name>
        <dbReference type="ChEBI" id="CHEBI:30616"/>
    </ligand>
</feature>
<name>UBIB_ECO7I</name>
<evidence type="ECO:0000255" key="1">
    <source>
        <dbReference type="HAMAP-Rule" id="MF_00414"/>
    </source>
</evidence>
<reference key="1">
    <citation type="journal article" date="2009" name="PLoS Genet.">
        <title>Organised genome dynamics in the Escherichia coli species results in highly diverse adaptive paths.</title>
        <authorList>
            <person name="Touchon M."/>
            <person name="Hoede C."/>
            <person name="Tenaillon O."/>
            <person name="Barbe V."/>
            <person name="Baeriswyl S."/>
            <person name="Bidet P."/>
            <person name="Bingen E."/>
            <person name="Bonacorsi S."/>
            <person name="Bouchier C."/>
            <person name="Bouvet O."/>
            <person name="Calteau A."/>
            <person name="Chiapello H."/>
            <person name="Clermont O."/>
            <person name="Cruveiller S."/>
            <person name="Danchin A."/>
            <person name="Diard M."/>
            <person name="Dossat C."/>
            <person name="Karoui M.E."/>
            <person name="Frapy E."/>
            <person name="Garry L."/>
            <person name="Ghigo J.M."/>
            <person name="Gilles A.M."/>
            <person name="Johnson J."/>
            <person name="Le Bouguenec C."/>
            <person name="Lescat M."/>
            <person name="Mangenot S."/>
            <person name="Martinez-Jehanne V."/>
            <person name="Matic I."/>
            <person name="Nassif X."/>
            <person name="Oztas S."/>
            <person name="Petit M.A."/>
            <person name="Pichon C."/>
            <person name="Rouy Z."/>
            <person name="Ruf C.S."/>
            <person name="Schneider D."/>
            <person name="Tourret J."/>
            <person name="Vacherie B."/>
            <person name="Vallenet D."/>
            <person name="Medigue C."/>
            <person name="Rocha E.P.C."/>
            <person name="Denamur E."/>
        </authorList>
    </citation>
    <scope>NUCLEOTIDE SEQUENCE [LARGE SCALE GENOMIC DNA]</scope>
    <source>
        <strain>IAI39 / ExPEC</strain>
    </source>
</reference>
<organism>
    <name type="scientific">Escherichia coli O7:K1 (strain IAI39 / ExPEC)</name>
    <dbReference type="NCBI Taxonomy" id="585057"/>
    <lineage>
        <taxon>Bacteria</taxon>
        <taxon>Pseudomonadati</taxon>
        <taxon>Pseudomonadota</taxon>
        <taxon>Gammaproteobacteria</taxon>
        <taxon>Enterobacterales</taxon>
        <taxon>Enterobacteriaceae</taxon>
        <taxon>Escherichia</taxon>
    </lineage>
</organism>
<proteinExistence type="inferred from homology"/>
<gene>
    <name evidence="1" type="primary">ubiB</name>
    <name type="ordered locus">ECIAI39_3160</name>
</gene>
<keyword id="KW-0067">ATP-binding</keyword>
<keyword id="KW-0997">Cell inner membrane</keyword>
<keyword id="KW-1003">Cell membrane</keyword>
<keyword id="KW-0418">Kinase</keyword>
<keyword id="KW-0472">Membrane</keyword>
<keyword id="KW-0547">Nucleotide-binding</keyword>
<keyword id="KW-0808">Transferase</keyword>
<keyword id="KW-0812">Transmembrane</keyword>
<keyword id="KW-1133">Transmembrane helix</keyword>
<keyword id="KW-0831">Ubiquinone biosynthesis</keyword>
<accession>B7NV31</accession>
<dbReference type="EC" id="2.7.-.-" evidence="1"/>
<dbReference type="EMBL" id="CU928164">
    <property type="protein sequence ID" value="CAR19279.1"/>
    <property type="molecule type" value="Genomic_DNA"/>
</dbReference>
<dbReference type="RefSeq" id="WP_000187543.1">
    <property type="nucleotide sequence ID" value="NC_011750.1"/>
</dbReference>
<dbReference type="RefSeq" id="YP_002409089.1">
    <property type="nucleotide sequence ID" value="NC_011750.1"/>
</dbReference>
<dbReference type="SMR" id="B7NV31"/>
<dbReference type="STRING" id="585057.ECIAI39_3160"/>
<dbReference type="GeneID" id="75174071"/>
<dbReference type="KEGG" id="ect:ECIAI39_3160"/>
<dbReference type="PATRIC" id="fig|585057.6.peg.3281"/>
<dbReference type="HOGENOM" id="CLU_006533_0_0_6"/>
<dbReference type="UniPathway" id="UPA00232"/>
<dbReference type="Proteomes" id="UP000000749">
    <property type="component" value="Chromosome"/>
</dbReference>
<dbReference type="GO" id="GO:0005886">
    <property type="term" value="C:plasma membrane"/>
    <property type="evidence" value="ECO:0007669"/>
    <property type="project" value="UniProtKB-SubCell"/>
</dbReference>
<dbReference type="GO" id="GO:0005524">
    <property type="term" value="F:ATP binding"/>
    <property type="evidence" value="ECO:0007669"/>
    <property type="project" value="UniProtKB-KW"/>
</dbReference>
<dbReference type="GO" id="GO:0004672">
    <property type="term" value="F:protein kinase activity"/>
    <property type="evidence" value="ECO:0007669"/>
    <property type="project" value="UniProtKB-UniRule"/>
</dbReference>
<dbReference type="GO" id="GO:0010795">
    <property type="term" value="P:regulation of ubiquinone biosynthetic process"/>
    <property type="evidence" value="ECO:0007669"/>
    <property type="project" value="UniProtKB-UniRule"/>
</dbReference>
<dbReference type="GO" id="GO:0006744">
    <property type="term" value="P:ubiquinone biosynthetic process"/>
    <property type="evidence" value="ECO:0007669"/>
    <property type="project" value="UniProtKB-UniPathway"/>
</dbReference>
<dbReference type="CDD" id="cd13972">
    <property type="entry name" value="UbiB"/>
    <property type="match status" value="1"/>
</dbReference>
<dbReference type="HAMAP" id="MF_00414">
    <property type="entry name" value="UbiB"/>
    <property type="match status" value="1"/>
</dbReference>
<dbReference type="InterPro" id="IPR004147">
    <property type="entry name" value="ABC1_dom"/>
</dbReference>
<dbReference type="InterPro" id="IPR011009">
    <property type="entry name" value="Kinase-like_dom_sf"/>
</dbReference>
<dbReference type="InterPro" id="IPR010232">
    <property type="entry name" value="UbiB"/>
</dbReference>
<dbReference type="InterPro" id="IPR045308">
    <property type="entry name" value="UbiB_bact"/>
</dbReference>
<dbReference type="InterPro" id="IPR050154">
    <property type="entry name" value="UbiB_kinase"/>
</dbReference>
<dbReference type="NCBIfam" id="NF003404">
    <property type="entry name" value="PRK04750.1"/>
    <property type="match status" value="1"/>
</dbReference>
<dbReference type="NCBIfam" id="TIGR01982">
    <property type="entry name" value="UbiB"/>
    <property type="match status" value="1"/>
</dbReference>
<dbReference type="PANTHER" id="PTHR10566">
    <property type="entry name" value="CHAPERONE-ACTIVITY OF BC1 COMPLEX CABC1 -RELATED"/>
    <property type="match status" value="1"/>
</dbReference>
<dbReference type="PANTHER" id="PTHR10566:SF113">
    <property type="entry name" value="PROTEIN ACTIVITY OF BC1 COMPLEX KINASE 7, CHLOROPLASTIC"/>
    <property type="match status" value="1"/>
</dbReference>
<dbReference type="Pfam" id="PF03109">
    <property type="entry name" value="ABC1"/>
    <property type="match status" value="1"/>
</dbReference>
<dbReference type="SUPFAM" id="SSF56112">
    <property type="entry name" value="Protein kinase-like (PK-like)"/>
    <property type="match status" value="1"/>
</dbReference>
<protein>
    <recommendedName>
        <fullName evidence="1">Probable protein kinase UbiB</fullName>
        <ecNumber evidence="1">2.7.-.-</ecNumber>
    </recommendedName>
    <alternativeName>
        <fullName evidence="1">Ubiquinone biosynthesis protein UbiB</fullName>
    </alternativeName>
</protein>
<comment type="function">
    <text evidence="1">Is probably a protein kinase regulator of UbiI activity which is involved in aerobic coenzyme Q (ubiquinone) biosynthesis.</text>
</comment>
<comment type="pathway">
    <text>Cofactor biosynthesis; ubiquinone biosynthesis [regulation].</text>
</comment>
<comment type="subcellular location">
    <subcellularLocation>
        <location evidence="1">Cell inner membrane</location>
        <topology evidence="1">Multi-pass membrane protein</topology>
    </subcellularLocation>
</comment>
<comment type="similarity">
    <text evidence="1">Belongs to the ABC1 family. UbiB subfamily.</text>
</comment>